<comment type="subunit">
    <text evidence="5">Probably associates with an alpha chain. Interacts (via C-terminus) with TRPC4.</text>
</comment>
<comment type="subcellular location">
    <subcellularLocation>
        <location>Cytoplasm</location>
        <location>Cytoskeleton</location>
    </subcellularLocation>
    <text>Detected prominently in the outer segments of photoreceptor rods and cones and in the basolateral membrane and cytosol of gastric epithelial cells.</text>
</comment>
<comment type="tissue specificity">
    <text>Expressed at very low levels in many tissues, with strongest expression in cerebellum, spinal cord, stomach, pituitary gland, liver, pancreas, salivary gland, kidney, bladder, and heart.</text>
</comment>
<comment type="similarity">
    <text evidence="6">Belongs to the spectrin family.</text>
</comment>
<gene>
    <name type="primary">SPTBN5</name>
    <name type="synonym">BSPECV</name>
    <name type="synonym">HUBSPECV</name>
    <name type="synonym">HUSPECV</name>
</gene>
<accession>Q9NRC6</accession>
<sequence length="3674" mass="416750">MAGQPHSPRELLGAAGHRSRRPSTELRVPPSPSLTMDSQYETGHIRKLQARHMQMQEKTFTKWINNVFQCGQAGIKIRNLYTELADGIHLLRLLELISGEALPPPSRGRLRVHFLENSSRALAFLRAKVPVPLIGPENIVDGDQTLILGLIWVIILRFQISHISLDKEEFGASAALLSTKEALLVWCQRKTASYTNVNITDFSRSWSDGLGFNALIHAHRPDLLDYGSLRPDRPLHNLAFAFLVAEQELGIAQLLDPEDVAAAQPDERSIMTYVSLYYHYCSRLHQGQTVQRRLTKILLQLQETELLQTQYEQLVADLLRWIAEKQMQLEARDFPDSLPAMRQLLAAFTIFRTQEKPPRLQQRGAAEALLFRLQTALQAQNRRPFLPHEGLGLAELSQCWAGLEWAEAARSQALQQRLLQLQRLETLARRFQHKAALRESFLKDAEQVLDQARAPPASLATVEAAVQRLGMLEAGILPQEGRFQALAEIADILRQEQYHSWADVARRQEEVTVRWQRLLQHLQGQRKQVADMQAVLSLLQEVEAASHQLEELQEPARSTACGQQLAEVVELLQRHDLLEAQVSAHGAHVSHLAQQTAELDSSLGTSVEVLQAKARTLAQLQQSLVALVRARRALLEQTLQRAEFLRNCEEEEAWLKECGQRVGNAALGRDLSQIAGALQKHKALEAEVHRHQAVCVDLVRRGRDLSARRPPTQPDPGERAEAVQGGWQLLQTRVVGRGARLQTALLVLQYFADAAEAASWLRERRSSLERASCGQDQAAAETLLRRHVRLERVLRAFAAELRRLEEQGRAASARASLFTVNSALSPPGESLRNPGPWSEASCHPGPGDAWKMALPAEPDPDFDPNTILQTQDHLSQDYESLRALAQLRRARLEEAMALFGFCSSCGELQLWLEKQTVLLQRVQPQADTLEVMQLKYENFLTALAVGKGLWAEVSSSAEQLRQRYPGNSTQIQRQQEELSQRWGQLEALKREKAVQLAHSVEVCSFLQECGPTQVQLRDVLLQLEALQPGSSEDTCHALQLAQKKTLVLERRVHFLQSVVVKVEEPGYAESQPLQGQVETLQGLLKQVQEQVAQRARRQAETQARQSFLQESQQLLLWAESVQAQLRSKEVSVDVASAQRLLREHQDLLEEIHLWQERLQQLDAQSQPMAALDCPDSQEVPNTLRVLGQQGQELKVLWEQRQQWLQEGLELQKFGREVDGFTATCANHQAWLHLDNLGEDVREALSLLQQHREFGRLLSTLGPRAEALRAHGEKLVQSQHPAAHTVREQLQSIQAQWTRLQGRSEQRRRQLLASLQLQEWKQDVAELMQWMEEKGLMAAHEPSGARRNILQTLKRHEAAESELLATRRHVEALQQVGRELLSRRPCGQEDIQTRLQGLRSKWEALNRKMTERGDELQQAGQQEQLLRQLQDAKEQLEQLEGALQSSETGQDLRSSQRLQKRHQQLESESRTLAAKMAALASMAHGMAASPAILEETQKHLRRLELLQGHLAIRGLQLQASVELHQFCHLSNMELSWVAEHMPHGSPTSYTECLNGAQSLHRKHKELQVEVKAHQGQVQRVLSSGRSLAASGHPQAQHIVEQCQELEGHWAELERACEARAQCLQQAVTFQQYFLDVSELEGWVEEKRPLVSSRDYGRDEAATLRLINKHQALQEELAIYWSSMEELDQTAQTLTGPEVPEQQRVVQERLREQLRALQELAATRDRELEGTLRLHEFLREAEDLQGWLASQKQAAKGGESLGEDPEHALHLCTKFAKFQHQVEMGSQRVAACRLLAESLLERGHSAGPMVRQRQQDLQTAWSELWELTQARGHALRDTETTLRVHRDLLEVLTQVQEKATSLPNNVARDLCGLEAQLRSHQGLERELVGTERQLQELLETAGRVQKLCPGPQAHAVQQRQQAVTQAWAVLQRRMEQRRAQLERARLLARFRTAVRDYASWAARVRQDLQVEESSQEPSSGPLKLSAHQWLRAELEAREKLWQQATQLGQQALLAAGTPTKEVQEELRALQDQRDQVYQTWARKQERLQAEQQEQLFLRECGRLEEILAAQEVSLKTSALGSSVEEVEQLIRKHEVFLKVLTAQDKKEAALRERLKTLRRPRVRDRLPILLQRRMRVKELAESRGHALHASLLMASFTQAATQAEDWIQAWAQQLKEPVPPGDLRDKLKPLLKHQAFEAEVQAHEEVMTSVAKKGEALLAQSHPRAGEVSQRLQGLRKHWEDLRQAMALRGQELEDRRNFLEFLQRVDLAEAWIQEKEVKMNVGDLGQDLEHCLQLRRRLREFRGNSAGDTVGDACIRSISDLSLQLKNRDPEEVKIICQRRSQLNNRWASFHGNLLRYQQQLEGALEIHVLSRELDNVTKRIQEKEALIQALDCGKDLESVQRLLRKHEELEREVHPIQAQVESLEREVGRLCQRSPEAAHGLRHRQQEVAESWWQLRSRAQKRREALDALHQAQKLQAMLQELLVSAQRLRAQMDTSPAPRSPVEARRMLEEHQECKAELDSWTDSISLARSTGQQLLTAGHPFSSDIRQVLAGLEQELSSLEGAWQEHQLQLQQALELQLFLSSVEKMERWLCSKEDSLASEGLWDPLAPMEPLLWKHKMLEWDLEVQAGKISALEATARGLHQGGHPEAQSALGRCQAMLLRKEALFRQAGTRRHRLEELRQLQAFLQDSQEVAAWLREKNLVALEEGLLDTAMLPAQLQKQQNFQAELDASMHQQQELQREGQRLLQGGHPASEAIQERLEELGALWGELQDNSQKKVAKLQKACEALRLRRSMEELENWLEPIEVELRAPTVGQALPGVGELLGTQRELEAAVDKKARQAEALLGQAQAFVREGHCLAQDVEEQARRLLQRFKSLREPLQERRTALEARSLLLKFFRDADEEMAWVQEKLPLAAAQDYGQSLSAVRHLQEQHQNLESEMSSHEALTRVVLGTGYKLVQAGHFAAHEVAARVQQLEKAMAHLRAEAARRRLLLQQAQEAQQFLTELLEAGSWLAERGHVLDSEDMGHSAEATQALLRRLEATKRDLEAFSPRIERLQQTAALLESRKNPESPKVLAQLQAVREAHAELLRRAEARGHGLQEQLQLHQLERETLLLDAWLTTKAATAESQDYGQDLEGVKVLEEKFDAFRKEVQSLGQAKVYALRKLAGTLERGAPRRYPHIQAQRSRIEAAWERLDQAIKARTENLAAAHEVHSFQQAAAELQGRMQEKTALMKGEDGGHSLSSVRTLQQQHRRLERELEAMEKEVARLQTEACRLGQLHPAAPGGLAKVQEAWATLQAKAQERGQWLAQAAQGHAFLGRCQELLAWAQERQELASSEELAEDVAGAEQLLGQHEELGQEIRECRLQAQDLRQEGQQLVDNSHFMSAEVTECLQELEGRLQELEEAWALRWQRCAESWGLQKLRQRLEQAEAWLACWEGLLLKPDYGHSVSDVELLLHRHQDLEKLLAAQEEKFAQMQKTEMEQELLLQPQELKPGRAGSSLTSFQWRPSGHQGLGAQLAETRDPQDAKGTPTMEGSLEFKQHLLPGGRQPSSSSWDSCRGNLQGSSLSLFLDERMAAEKVASIALLDLTGARCERLRGRHGRKHTFSLRLTSGAEILFAAPSEEQAESWWRALGSTAAQSLSPKLKAKPVSSLNECTTKDARPGCLLRSDP</sequence>
<proteinExistence type="evidence at protein level"/>
<feature type="chain" id="PRO_0000073466" description="Spectrin beta chain, non-erythrocytic 5">
    <location>
        <begin position="1"/>
        <end position="3674"/>
    </location>
</feature>
<feature type="domain" description="Calponin-homology (CH) 1" evidence="2">
    <location>
        <begin position="54"/>
        <end position="159"/>
    </location>
</feature>
<feature type="domain" description="Calponin-homology (CH) 2" evidence="2">
    <location>
        <begin position="177"/>
        <end position="282"/>
    </location>
</feature>
<feature type="repeat" description="Spectrin 1" evidence="1">
    <location>
        <begin position="307"/>
        <end position="416"/>
    </location>
</feature>
<feature type="repeat" description="Spectrin 2" evidence="1">
    <location>
        <begin position="428"/>
        <end position="529"/>
    </location>
</feature>
<feature type="repeat" description="Spectrin 3" evidence="1">
    <location>
        <begin position="642"/>
        <end position="742"/>
    </location>
</feature>
<feature type="repeat" description="Spectrin 4" evidence="1">
    <location>
        <begin position="747"/>
        <end position="810"/>
    </location>
</feature>
<feature type="repeat" description="Spectrin 5" evidence="1">
    <location>
        <begin position="900"/>
        <end position="996"/>
    </location>
</feature>
<feature type="repeat" description="Spectrin 6" evidence="1">
    <location>
        <begin position="1103"/>
        <end position="1206"/>
    </location>
</feature>
<feature type="repeat" description="Spectrin 7" evidence="1">
    <location>
        <begin position="1209"/>
        <end position="1311"/>
    </location>
</feature>
<feature type="repeat" description="Spectrin 8" evidence="1">
    <location>
        <begin position="1315"/>
        <end position="1417"/>
    </location>
</feature>
<feature type="repeat" description="Spectrin 9" evidence="1">
    <location>
        <begin position="1521"/>
        <end position="1624"/>
    </location>
</feature>
<feature type="repeat" description="Spectrin 10" evidence="1">
    <location>
        <begin position="1628"/>
        <end position="1727"/>
    </location>
</feature>
<feature type="repeat" description="Spectrin 11" evidence="1">
    <location>
        <begin position="1731"/>
        <end position="1835"/>
    </location>
</feature>
<feature type="repeat" description="Spectrin 12" evidence="1">
    <location>
        <begin position="1842"/>
        <end position="1940"/>
    </location>
</feature>
<feature type="repeat" description="Spectrin 13" evidence="1">
    <location>
        <begin position="1944"/>
        <end position="2046"/>
    </location>
</feature>
<feature type="repeat" description="Spectrin 14" evidence="1">
    <location>
        <begin position="2052"/>
        <end position="2146"/>
    </location>
</feature>
<feature type="repeat" description="Spectrin 15" evidence="1">
    <location>
        <begin position="2150"/>
        <end position="2253"/>
    </location>
</feature>
<feature type="repeat" description="Spectrin 16" evidence="1">
    <location>
        <begin position="2256"/>
        <end position="2361"/>
    </location>
</feature>
<feature type="repeat" description="Spectrin 17" evidence="1">
    <location>
        <begin position="2366"/>
        <end position="2467"/>
    </location>
</feature>
<feature type="repeat" description="Spectrin 18" evidence="1">
    <location>
        <begin position="2471"/>
        <end position="2574"/>
    </location>
</feature>
<feature type="repeat" description="Spectrin 19" evidence="1">
    <location>
        <begin position="2577"/>
        <end position="2680"/>
    </location>
</feature>
<feature type="repeat" description="Spectrin 20" evidence="1">
    <location>
        <begin position="2683"/>
        <end position="2784"/>
    </location>
</feature>
<feature type="repeat" description="Spectrin 21" evidence="1">
    <location>
        <begin position="2791"/>
        <end position="2890"/>
    </location>
</feature>
<feature type="repeat" description="Spectrin 22" evidence="1">
    <location>
        <begin position="2894"/>
        <end position="2997"/>
    </location>
</feature>
<feature type="repeat" description="Spectrin 23" evidence="1">
    <location>
        <begin position="3000"/>
        <end position="3103"/>
    </location>
</feature>
<feature type="repeat" description="Spectrin 24" evidence="1">
    <location>
        <begin position="3106"/>
        <end position="3209"/>
    </location>
</feature>
<feature type="repeat" description="Spectrin 25" evidence="1">
    <location>
        <begin position="3213"/>
        <end position="3311"/>
    </location>
</feature>
<feature type="repeat" description="Spectrin 26" evidence="1">
    <location>
        <begin position="3318"/>
        <end position="3415"/>
    </location>
</feature>
<feature type="repeat" description="Spectrin 27" evidence="1">
    <location>
        <begin position="3422"/>
        <end position="3488"/>
    </location>
</feature>
<feature type="domain" description="PH" evidence="3">
    <location>
        <begin position="3533"/>
        <end position="3641"/>
    </location>
</feature>
<feature type="region of interest" description="Actin-binding">
    <location>
        <begin position="1"/>
        <end position="279"/>
    </location>
</feature>
<feature type="region of interest" description="Disordered" evidence="4">
    <location>
        <begin position="1"/>
        <end position="37"/>
    </location>
</feature>
<feature type="region of interest" description="Disordered" evidence="4">
    <location>
        <begin position="1441"/>
        <end position="1469"/>
    </location>
</feature>
<feature type="compositionally biased region" description="Polar residues" evidence="4">
    <location>
        <begin position="1442"/>
        <end position="1456"/>
    </location>
</feature>
<feature type="sequence variant" id="VAR_022050" description="In dbSNP:rs2290559.">
    <original>R</original>
    <variation>H</variation>
    <location>
        <position position="1345"/>
    </location>
</feature>
<feature type="sequence variant" id="VAR_024395" description="In dbSNP:rs2290558.">
    <original>R</original>
    <variation>T</variation>
    <location>
        <position position="1367"/>
    </location>
</feature>
<feature type="sequence variant" id="VAR_024396" description="In dbSNP:rs1456235.">
    <original>Q</original>
    <variation>R</variation>
    <location>
        <position position="2862"/>
    </location>
</feature>
<feature type="sequence variant" id="VAR_024397" description="In dbSNP:rs1197660.">
    <original>A</original>
    <variation>G</variation>
    <location>
        <position position="3275"/>
    </location>
</feature>
<feature type="sequence conflict" description="In Ref. 1; AAF65317." evidence="6" ref="1">
    <original>H</original>
    <variation>R</variation>
    <location>
        <position position="433"/>
    </location>
</feature>
<feature type="sequence conflict" description="In Ref. 1; AAF65317." evidence="6" ref="1">
    <original>C</original>
    <variation>R</variation>
    <location>
        <position position="1035"/>
    </location>
</feature>
<feature type="sequence conflict" description="In Ref. 1; AAF65317." evidence="6" ref="1">
    <original>H</original>
    <variation>Y</variation>
    <location>
        <position position="1053"/>
    </location>
</feature>
<feature type="sequence conflict" description="In Ref. 1; AAF65317." evidence="6" ref="1">
    <original>N</original>
    <variation>T</variation>
    <location>
        <position position="3564"/>
    </location>
</feature>
<organism>
    <name type="scientific">Homo sapiens</name>
    <name type="common">Human</name>
    <dbReference type="NCBI Taxonomy" id="9606"/>
    <lineage>
        <taxon>Eukaryota</taxon>
        <taxon>Metazoa</taxon>
        <taxon>Chordata</taxon>
        <taxon>Craniata</taxon>
        <taxon>Vertebrata</taxon>
        <taxon>Euteleostomi</taxon>
        <taxon>Mammalia</taxon>
        <taxon>Eutheria</taxon>
        <taxon>Euarchontoglires</taxon>
        <taxon>Primates</taxon>
        <taxon>Haplorrhini</taxon>
        <taxon>Catarrhini</taxon>
        <taxon>Hominidae</taxon>
        <taxon>Homo</taxon>
    </lineage>
</organism>
<dbReference type="EMBL" id="AF233523">
    <property type="protein sequence ID" value="AAF65317.1"/>
    <property type="molecule type" value="mRNA"/>
</dbReference>
<dbReference type="EMBL" id="AC020659">
    <property type="status" value="NOT_ANNOTATED_CDS"/>
    <property type="molecule type" value="Genomic_DNA"/>
</dbReference>
<dbReference type="CCDS" id="CCDS61599.1"/>
<dbReference type="RefSeq" id="NP_057726.4">
    <property type="nucleotide sequence ID" value="NM_016642.4"/>
</dbReference>
<dbReference type="SMR" id="Q9NRC6"/>
<dbReference type="BioGRID" id="119479">
    <property type="interactions" value="16"/>
</dbReference>
<dbReference type="FunCoup" id="Q9NRC6">
    <property type="interactions" value="203"/>
</dbReference>
<dbReference type="IntAct" id="Q9NRC6">
    <property type="interactions" value="13"/>
</dbReference>
<dbReference type="STRING" id="9606.ENSP00000317790"/>
<dbReference type="GlyGen" id="Q9NRC6">
    <property type="glycosylation" value="2 sites, 1 N-linked glycan (1 site), 1 O-linked glycan (1 site)"/>
</dbReference>
<dbReference type="iPTMnet" id="Q9NRC6"/>
<dbReference type="PhosphoSitePlus" id="Q9NRC6"/>
<dbReference type="BioMuta" id="SPTBN5"/>
<dbReference type="DMDM" id="17369320"/>
<dbReference type="jPOST" id="Q9NRC6"/>
<dbReference type="MassIVE" id="Q9NRC6"/>
<dbReference type="PaxDb" id="9606-ENSP00000317790"/>
<dbReference type="PeptideAtlas" id="Q9NRC6"/>
<dbReference type="ProteomicsDB" id="82333"/>
<dbReference type="Antibodypedia" id="57995">
    <property type="antibodies" value="45 antibodies from 16 providers"/>
</dbReference>
<dbReference type="DNASU" id="51332"/>
<dbReference type="Ensembl" id="ENST00000320955.8">
    <property type="protein sequence ID" value="ENSP00000317790.6"/>
    <property type="gene ID" value="ENSG00000137877.10"/>
</dbReference>
<dbReference type="GeneID" id="51332"/>
<dbReference type="KEGG" id="hsa:51332"/>
<dbReference type="MANE-Select" id="ENST00000320955.8">
    <property type="protein sequence ID" value="ENSP00000317790.6"/>
    <property type="RefSeq nucleotide sequence ID" value="NM_016642.4"/>
    <property type="RefSeq protein sequence ID" value="NP_057726.4"/>
</dbReference>
<dbReference type="UCSC" id="uc001zos.5">
    <property type="organism name" value="human"/>
</dbReference>
<dbReference type="AGR" id="HGNC:15680"/>
<dbReference type="CTD" id="51332"/>
<dbReference type="DisGeNET" id="51332"/>
<dbReference type="GeneCards" id="SPTBN5"/>
<dbReference type="HGNC" id="HGNC:15680">
    <property type="gene designation" value="SPTBN5"/>
</dbReference>
<dbReference type="HPA" id="ENSG00000137877">
    <property type="expression patterns" value="Group enriched (brain, retina)"/>
</dbReference>
<dbReference type="MalaCards" id="SPTBN5"/>
<dbReference type="MIM" id="605916">
    <property type="type" value="gene"/>
</dbReference>
<dbReference type="neXtProt" id="NX_Q9NRC6"/>
<dbReference type="OpenTargets" id="ENSG00000137877"/>
<dbReference type="PharmGKB" id="PA38020"/>
<dbReference type="VEuPathDB" id="HostDB:ENSG00000137877"/>
<dbReference type="eggNOG" id="KOG0517">
    <property type="taxonomic scope" value="Eukaryota"/>
</dbReference>
<dbReference type="GeneTree" id="ENSGT00940000161549"/>
<dbReference type="HOGENOM" id="CLU_000146_3_1_1"/>
<dbReference type="InParanoid" id="Q9NRC6"/>
<dbReference type="OMA" id="WANEMHA"/>
<dbReference type="OrthoDB" id="9942256at2759"/>
<dbReference type="PAN-GO" id="Q9NRC6">
    <property type="GO annotations" value="0 GO annotations based on evolutionary models"/>
</dbReference>
<dbReference type="PhylomeDB" id="Q9NRC6"/>
<dbReference type="TreeFam" id="TF313446"/>
<dbReference type="PathwayCommons" id="Q9NRC6"/>
<dbReference type="Reactome" id="R-HSA-375165">
    <property type="pathway name" value="NCAM signaling for neurite out-growth"/>
</dbReference>
<dbReference type="Reactome" id="R-HSA-445095">
    <property type="pathway name" value="Interaction between L1 and Ankyrins"/>
</dbReference>
<dbReference type="Reactome" id="R-HSA-5673001">
    <property type="pathway name" value="RAF/MAP kinase cascade"/>
</dbReference>
<dbReference type="Reactome" id="R-HSA-6807878">
    <property type="pathway name" value="COPI-mediated anterograde transport"/>
</dbReference>
<dbReference type="SignaLink" id="Q9NRC6"/>
<dbReference type="BioGRID-ORCS" id="51332">
    <property type="hits" value="18 hits in 1117 CRISPR screens"/>
</dbReference>
<dbReference type="CD-CODE" id="232F8A39">
    <property type="entry name" value="P-body"/>
</dbReference>
<dbReference type="ChiTaRS" id="SPTBN5">
    <property type="organism name" value="human"/>
</dbReference>
<dbReference type="GeneWiki" id="SPTBN5"/>
<dbReference type="GenomeRNAi" id="51332"/>
<dbReference type="Pharos" id="Q9NRC6">
    <property type="development level" value="Tbio"/>
</dbReference>
<dbReference type="PRO" id="PR:Q9NRC6"/>
<dbReference type="Proteomes" id="UP000005640">
    <property type="component" value="Chromosome 15"/>
</dbReference>
<dbReference type="RNAct" id="Q9NRC6">
    <property type="molecule type" value="protein"/>
</dbReference>
<dbReference type="Bgee" id="ENSG00000137877">
    <property type="expression patterns" value="Expressed in sural nerve and 103 other cell types or tissues"/>
</dbReference>
<dbReference type="GO" id="GO:0045179">
    <property type="term" value="C:apical cortex"/>
    <property type="evidence" value="ECO:0007669"/>
    <property type="project" value="Ensembl"/>
</dbReference>
<dbReference type="GO" id="GO:0030054">
    <property type="term" value="C:cell junction"/>
    <property type="evidence" value="ECO:0000318"/>
    <property type="project" value="GO_Central"/>
</dbReference>
<dbReference type="GO" id="GO:0042995">
    <property type="term" value="C:cell projection"/>
    <property type="evidence" value="ECO:0000318"/>
    <property type="project" value="GO_Central"/>
</dbReference>
<dbReference type="GO" id="GO:0030864">
    <property type="term" value="C:cortical actin cytoskeleton"/>
    <property type="evidence" value="ECO:0000318"/>
    <property type="project" value="GO_Central"/>
</dbReference>
<dbReference type="GO" id="GO:0005737">
    <property type="term" value="C:cytoplasm"/>
    <property type="evidence" value="ECO:0000314"/>
    <property type="project" value="MGI"/>
</dbReference>
<dbReference type="GO" id="GO:0005829">
    <property type="term" value="C:cytosol"/>
    <property type="evidence" value="ECO:0000304"/>
    <property type="project" value="Reactome"/>
</dbReference>
<dbReference type="GO" id="GO:0016020">
    <property type="term" value="C:membrane"/>
    <property type="evidence" value="ECO:0000303"/>
    <property type="project" value="UniProtKB"/>
</dbReference>
<dbReference type="GO" id="GO:0005875">
    <property type="term" value="C:microtubule associated complex"/>
    <property type="evidence" value="ECO:0007669"/>
    <property type="project" value="Ensembl"/>
</dbReference>
<dbReference type="GO" id="GO:0032391">
    <property type="term" value="C:photoreceptor connecting cilium"/>
    <property type="evidence" value="ECO:0000314"/>
    <property type="project" value="MGI"/>
</dbReference>
<dbReference type="GO" id="GO:0097381">
    <property type="term" value="C:photoreceptor disc membrane"/>
    <property type="evidence" value="ECO:0000314"/>
    <property type="project" value="MGI"/>
</dbReference>
<dbReference type="GO" id="GO:0005886">
    <property type="term" value="C:plasma membrane"/>
    <property type="evidence" value="ECO:0000318"/>
    <property type="project" value="GO_Central"/>
</dbReference>
<dbReference type="GO" id="GO:0008091">
    <property type="term" value="C:spectrin"/>
    <property type="evidence" value="ECO:0000303"/>
    <property type="project" value="UniProtKB"/>
</dbReference>
<dbReference type="GO" id="GO:0003779">
    <property type="term" value="F:actin binding"/>
    <property type="evidence" value="ECO:0000303"/>
    <property type="project" value="UniProtKB"/>
</dbReference>
<dbReference type="GO" id="GO:0051015">
    <property type="term" value="F:actin filament binding"/>
    <property type="evidence" value="ECO:0000318"/>
    <property type="project" value="GO_Central"/>
</dbReference>
<dbReference type="GO" id="GO:0034452">
    <property type="term" value="F:dynactin binding"/>
    <property type="evidence" value="ECO:0000314"/>
    <property type="project" value="MGI"/>
</dbReference>
<dbReference type="GO" id="GO:0045505">
    <property type="term" value="F:dynein intermediate chain binding"/>
    <property type="evidence" value="ECO:0000314"/>
    <property type="project" value="MGI"/>
</dbReference>
<dbReference type="GO" id="GO:0042802">
    <property type="term" value="F:identical protein binding"/>
    <property type="evidence" value="ECO:0000314"/>
    <property type="project" value="MGI"/>
</dbReference>
<dbReference type="GO" id="GO:0019894">
    <property type="term" value="F:kinesin binding"/>
    <property type="evidence" value="ECO:0000314"/>
    <property type="project" value="MGI"/>
</dbReference>
<dbReference type="GO" id="GO:0032029">
    <property type="term" value="F:myosin tail binding"/>
    <property type="evidence" value="ECO:0000314"/>
    <property type="project" value="MGI"/>
</dbReference>
<dbReference type="GO" id="GO:0002046">
    <property type="term" value="F:opsin binding"/>
    <property type="evidence" value="ECO:0007669"/>
    <property type="project" value="Ensembl"/>
</dbReference>
<dbReference type="GO" id="GO:0030507">
    <property type="term" value="F:spectrin binding"/>
    <property type="evidence" value="ECO:0000314"/>
    <property type="project" value="MGI"/>
</dbReference>
<dbReference type="GO" id="GO:0030036">
    <property type="term" value="P:actin cytoskeleton organization"/>
    <property type="evidence" value="ECO:0000318"/>
    <property type="project" value="GO_Central"/>
</dbReference>
<dbReference type="GO" id="GO:0051693">
    <property type="term" value="P:actin filament capping"/>
    <property type="evidence" value="ECO:0007669"/>
    <property type="project" value="UniProtKB-KW"/>
</dbReference>
<dbReference type="GO" id="GO:0007030">
    <property type="term" value="P:Golgi organization"/>
    <property type="evidence" value="ECO:0000315"/>
    <property type="project" value="MGI"/>
</dbReference>
<dbReference type="GO" id="GO:0007041">
    <property type="term" value="P:lysosomal transport"/>
    <property type="evidence" value="ECO:0000315"/>
    <property type="project" value="MGI"/>
</dbReference>
<dbReference type="CDD" id="cd21247">
    <property type="entry name" value="CH_SPTBN5_rpt1"/>
    <property type="match status" value="1"/>
</dbReference>
<dbReference type="CDD" id="cd21249">
    <property type="entry name" value="CH_SPTBN5_rpt2"/>
    <property type="match status" value="1"/>
</dbReference>
<dbReference type="CDD" id="cd00176">
    <property type="entry name" value="SPEC"/>
    <property type="match status" value="16"/>
</dbReference>
<dbReference type="FunFam" id="1.10.418.10:FF:000001">
    <property type="entry name" value="Actinin alpha 1"/>
    <property type="match status" value="1"/>
</dbReference>
<dbReference type="FunFam" id="1.20.58.60:FF:000007">
    <property type="entry name" value="Spectrin alpha chain non-erythrocytic 1"/>
    <property type="match status" value="2"/>
</dbReference>
<dbReference type="FunFam" id="1.20.58.60:FF:000011">
    <property type="entry name" value="Spectrin beta chain"/>
    <property type="match status" value="1"/>
</dbReference>
<dbReference type="FunFam" id="2.30.29.30:FF:000024">
    <property type="entry name" value="Spectrin beta chain"/>
    <property type="match status" value="1"/>
</dbReference>
<dbReference type="FunFam" id="1.10.418.10:FF:000043">
    <property type="entry name" value="Spectrin beta chain, non-erythrocytic"/>
    <property type="match status" value="1"/>
</dbReference>
<dbReference type="FunFam" id="1.20.58.60:FF:000135">
    <property type="entry name" value="Spectrin beta chain, non-erythrocytic"/>
    <property type="match status" value="1"/>
</dbReference>
<dbReference type="FunFam" id="1.20.58.60:FF:000253">
    <property type="entry name" value="Spectrin beta, non-erythrocytic 5"/>
    <property type="match status" value="1"/>
</dbReference>
<dbReference type="FunFam" id="1.20.58.60:FF:000259">
    <property type="entry name" value="Spectrin beta, non-erythrocytic 5"/>
    <property type="match status" value="1"/>
</dbReference>
<dbReference type="FunFam" id="1.20.58.60:FF:000280">
    <property type="entry name" value="Spectrin beta, non-erythrocytic 5"/>
    <property type="match status" value="1"/>
</dbReference>
<dbReference type="FunFam" id="1.20.58.60:FF:000282">
    <property type="entry name" value="Spectrin beta, non-erythrocytic 5"/>
    <property type="match status" value="1"/>
</dbReference>
<dbReference type="FunFam" id="1.20.58.60:FF:000289">
    <property type="entry name" value="Spectrin beta, non-erythrocytic 5"/>
    <property type="match status" value="1"/>
</dbReference>
<dbReference type="FunFam" id="1.20.58.60:FF:000300">
    <property type="entry name" value="Spectrin beta, non-erythrocytic 5"/>
    <property type="match status" value="1"/>
</dbReference>
<dbReference type="FunFam" id="1.20.58.60:FF:000301">
    <property type="entry name" value="Spectrin beta, non-erythrocytic 5"/>
    <property type="match status" value="1"/>
</dbReference>
<dbReference type="FunFam" id="1.20.58.60:FF:000302">
    <property type="entry name" value="Spectrin beta, non-erythrocytic 5"/>
    <property type="match status" value="1"/>
</dbReference>
<dbReference type="FunFam" id="1.20.58.60:FF:000307">
    <property type="entry name" value="Spectrin beta, non-erythrocytic 5"/>
    <property type="match status" value="1"/>
</dbReference>
<dbReference type="FunFam" id="1.20.58.60:FF:000318">
    <property type="entry name" value="Spectrin beta, non-erythrocytic 5"/>
    <property type="match status" value="1"/>
</dbReference>
<dbReference type="FunFam" id="1.20.58.60:FF:000351">
    <property type="entry name" value="Spectrin beta, non-erythrocytic 5"/>
    <property type="match status" value="1"/>
</dbReference>
<dbReference type="FunFam" id="1.20.58.60:FF:000368">
    <property type="entry name" value="Spectrin beta, non-erythrocytic 5"/>
    <property type="match status" value="1"/>
</dbReference>
<dbReference type="FunFam" id="1.20.58.60:FF:000377">
    <property type="entry name" value="Spectrin beta, non-erythrocytic 5"/>
    <property type="match status" value="1"/>
</dbReference>
<dbReference type="FunFam" id="1.20.58.60:FF:000408">
    <property type="entry name" value="Spectrin beta, non-erythrocytic 5"/>
    <property type="match status" value="1"/>
</dbReference>
<dbReference type="FunFam" id="1.20.58.60:FF:000449">
    <property type="entry name" value="Spectrin beta, non-erythrocytic 5"/>
    <property type="match status" value="1"/>
</dbReference>
<dbReference type="FunFam" id="1.20.58.60:FF:000450">
    <property type="entry name" value="Spectrin beta, non-erythrocytic 5"/>
    <property type="match status" value="1"/>
</dbReference>
<dbReference type="FunFam" id="1.20.58.60:FF:000293">
    <property type="entry name" value="Spectrin, beta, non-erythrocytic 5"/>
    <property type="match status" value="1"/>
</dbReference>
<dbReference type="Gene3D" id="1.20.58.60">
    <property type="match status" value="22"/>
</dbReference>
<dbReference type="Gene3D" id="1.10.418.10">
    <property type="entry name" value="Calponin-like domain"/>
    <property type="match status" value="2"/>
</dbReference>
<dbReference type="Gene3D" id="2.30.29.30">
    <property type="entry name" value="Pleckstrin-homology domain (PH domain)/Phosphotyrosine-binding domain (PTB)"/>
    <property type="match status" value="1"/>
</dbReference>
<dbReference type="InterPro" id="IPR001589">
    <property type="entry name" value="Actinin_actin-bd_CS"/>
</dbReference>
<dbReference type="InterPro" id="IPR001715">
    <property type="entry name" value="CH_dom"/>
</dbReference>
<dbReference type="InterPro" id="IPR036872">
    <property type="entry name" value="CH_dom_sf"/>
</dbReference>
<dbReference type="InterPro" id="IPR011993">
    <property type="entry name" value="PH-like_dom_sf"/>
</dbReference>
<dbReference type="InterPro" id="IPR001849">
    <property type="entry name" value="PH_domain"/>
</dbReference>
<dbReference type="InterPro" id="IPR018159">
    <property type="entry name" value="Spectrin/alpha-actinin"/>
</dbReference>
<dbReference type="InterPro" id="IPR002017">
    <property type="entry name" value="Spectrin_repeat"/>
</dbReference>
<dbReference type="PANTHER" id="PTHR11915">
    <property type="entry name" value="SPECTRIN/FILAMIN RELATED CYTOSKELETAL PROTEIN"/>
    <property type="match status" value="1"/>
</dbReference>
<dbReference type="Pfam" id="PF00307">
    <property type="entry name" value="CH"/>
    <property type="match status" value="2"/>
</dbReference>
<dbReference type="Pfam" id="PF00169">
    <property type="entry name" value="PH"/>
    <property type="match status" value="1"/>
</dbReference>
<dbReference type="Pfam" id="PF00435">
    <property type="entry name" value="Spectrin"/>
    <property type="match status" value="27"/>
</dbReference>
<dbReference type="SMART" id="SM00033">
    <property type="entry name" value="CH"/>
    <property type="match status" value="2"/>
</dbReference>
<dbReference type="SMART" id="SM00233">
    <property type="entry name" value="PH"/>
    <property type="match status" value="1"/>
</dbReference>
<dbReference type="SMART" id="SM00150">
    <property type="entry name" value="SPEC"/>
    <property type="match status" value="30"/>
</dbReference>
<dbReference type="SUPFAM" id="SSF47576">
    <property type="entry name" value="Calponin-homology domain, CH-domain"/>
    <property type="match status" value="1"/>
</dbReference>
<dbReference type="SUPFAM" id="SSF50729">
    <property type="entry name" value="PH domain-like"/>
    <property type="match status" value="1"/>
</dbReference>
<dbReference type="SUPFAM" id="SSF46966">
    <property type="entry name" value="Spectrin repeat"/>
    <property type="match status" value="23"/>
</dbReference>
<dbReference type="PROSITE" id="PS00019">
    <property type="entry name" value="ACTININ_1"/>
    <property type="match status" value="1"/>
</dbReference>
<dbReference type="PROSITE" id="PS00020">
    <property type="entry name" value="ACTININ_2"/>
    <property type="match status" value="1"/>
</dbReference>
<dbReference type="PROSITE" id="PS50021">
    <property type="entry name" value="CH"/>
    <property type="match status" value="2"/>
</dbReference>
<dbReference type="PROSITE" id="PS50003">
    <property type="entry name" value="PH_DOMAIN"/>
    <property type="match status" value="1"/>
</dbReference>
<reference key="1">
    <citation type="journal article" date="2000" name="J. Biol. Chem.">
        <title>Identification and characterization of beta V spectrin, a mammalian ortholog of Drosophila beta H spectrin.</title>
        <authorList>
            <person name="Stabach P.R."/>
            <person name="Morrow J.S."/>
        </authorList>
    </citation>
    <scope>NUCLEOTIDE SEQUENCE [MRNA]</scope>
    <source>
        <tissue>Cerebellum</tissue>
        <tissue>Retina</tissue>
        <tissue>Spinal cord</tissue>
    </source>
</reference>
<reference key="2">
    <citation type="journal article" date="2006" name="Nature">
        <title>Analysis of the DNA sequence and duplication history of human chromosome 15.</title>
        <authorList>
            <person name="Zody M.C."/>
            <person name="Garber M."/>
            <person name="Sharpe T."/>
            <person name="Young S.K."/>
            <person name="Rowen L."/>
            <person name="O'Neill K."/>
            <person name="Whittaker C.A."/>
            <person name="Kamal M."/>
            <person name="Chang J.L."/>
            <person name="Cuomo C.A."/>
            <person name="Dewar K."/>
            <person name="FitzGerald M.G."/>
            <person name="Kodira C.D."/>
            <person name="Madan A."/>
            <person name="Qin S."/>
            <person name="Yang X."/>
            <person name="Abbasi N."/>
            <person name="Abouelleil A."/>
            <person name="Arachchi H.M."/>
            <person name="Baradarani L."/>
            <person name="Birditt B."/>
            <person name="Bloom S."/>
            <person name="Bloom T."/>
            <person name="Borowsky M.L."/>
            <person name="Burke J."/>
            <person name="Butler J."/>
            <person name="Cook A."/>
            <person name="DeArellano K."/>
            <person name="DeCaprio D."/>
            <person name="Dorris L. III"/>
            <person name="Dors M."/>
            <person name="Eichler E.E."/>
            <person name="Engels R."/>
            <person name="Fahey J."/>
            <person name="Fleetwood P."/>
            <person name="Friedman C."/>
            <person name="Gearin G."/>
            <person name="Hall J.L."/>
            <person name="Hensley G."/>
            <person name="Johnson E."/>
            <person name="Jones C."/>
            <person name="Kamat A."/>
            <person name="Kaur A."/>
            <person name="Locke D.P."/>
            <person name="Madan A."/>
            <person name="Munson G."/>
            <person name="Jaffe D.B."/>
            <person name="Lui A."/>
            <person name="Macdonald P."/>
            <person name="Mauceli E."/>
            <person name="Naylor J.W."/>
            <person name="Nesbitt R."/>
            <person name="Nicol R."/>
            <person name="O'Leary S.B."/>
            <person name="Ratcliffe A."/>
            <person name="Rounsley S."/>
            <person name="She X."/>
            <person name="Sneddon K.M.B."/>
            <person name="Stewart S."/>
            <person name="Sougnez C."/>
            <person name="Stone S.M."/>
            <person name="Topham K."/>
            <person name="Vincent D."/>
            <person name="Wang S."/>
            <person name="Zimmer A.R."/>
            <person name="Birren B.W."/>
            <person name="Hood L."/>
            <person name="Lander E.S."/>
            <person name="Nusbaum C."/>
        </authorList>
    </citation>
    <scope>NUCLEOTIDE SEQUENCE [LARGE SCALE GENOMIC DNA]</scope>
</reference>
<reference key="3">
    <citation type="journal article" date="2008" name="J. Biol. Chem.">
        <title>The spectrin cytoskeleton influences the surface expression and activation of human transient receptor potential channel 4 channels.</title>
        <authorList>
            <person name="Odell A.F."/>
            <person name="Van Helden D.F."/>
            <person name="Scott J.L."/>
        </authorList>
    </citation>
    <scope>INTERACTION WITH TRPC4</scope>
</reference>
<evidence type="ECO:0000255" key="1"/>
<evidence type="ECO:0000255" key="2">
    <source>
        <dbReference type="PROSITE-ProRule" id="PRU00044"/>
    </source>
</evidence>
<evidence type="ECO:0000255" key="3">
    <source>
        <dbReference type="PROSITE-ProRule" id="PRU00145"/>
    </source>
</evidence>
<evidence type="ECO:0000256" key="4">
    <source>
        <dbReference type="SAM" id="MobiDB-lite"/>
    </source>
</evidence>
<evidence type="ECO:0000269" key="5">
    <source>
    </source>
</evidence>
<evidence type="ECO:0000305" key="6"/>
<protein>
    <recommendedName>
        <fullName>Spectrin beta chain, non-erythrocytic 5</fullName>
    </recommendedName>
    <alternativeName>
        <fullName>Beta-V spectrin</fullName>
    </alternativeName>
</protein>
<name>SPTN5_HUMAN</name>
<keyword id="KW-0117">Actin capping</keyword>
<keyword id="KW-0009">Actin-binding</keyword>
<keyword id="KW-0963">Cytoplasm</keyword>
<keyword id="KW-0206">Cytoskeleton</keyword>
<keyword id="KW-1267">Proteomics identification</keyword>
<keyword id="KW-1185">Reference proteome</keyword>
<keyword id="KW-0677">Repeat</keyword>